<comment type="function">
    <text evidence="1">Splits dipeptides with a prolyl residue in the C-terminal position.</text>
</comment>
<comment type="catalytic activity">
    <reaction evidence="1">
        <text>Xaa-L-Pro dipeptide + H2O = an L-alpha-amino acid + L-proline</text>
        <dbReference type="Rhea" id="RHEA:76407"/>
        <dbReference type="ChEBI" id="CHEBI:15377"/>
        <dbReference type="ChEBI" id="CHEBI:59869"/>
        <dbReference type="ChEBI" id="CHEBI:60039"/>
        <dbReference type="ChEBI" id="CHEBI:195196"/>
        <dbReference type="EC" id="3.4.13.9"/>
    </reaction>
</comment>
<comment type="cofactor">
    <cofactor evidence="1">
        <name>Mn(2+)</name>
        <dbReference type="ChEBI" id="CHEBI:29035"/>
    </cofactor>
    <text evidence="1">Binds 2 manganese ions per subunit.</text>
</comment>
<comment type="similarity">
    <text evidence="1">Belongs to the peptidase M24B family. Bacterial-type prolidase subfamily.</text>
</comment>
<keyword id="KW-0224">Dipeptidase</keyword>
<keyword id="KW-0378">Hydrolase</keyword>
<keyword id="KW-0464">Manganese</keyword>
<keyword id="KW-0479">Metal-binding</keyword>
<keyword id="KW-0482">Metalloprotease</keyword>
<keyword id="KW-0645">Protease</keyword>
<keyword id="KW-1185">Reference proteome</keyword>
<accession>B1KCZ4</accession>
<sequence>MDQLANHFKSHIAELNHRVAEIISRENLSGLVIHSGQPHRQFLDDMDYPFKVNPHFKAWLPILDNPHCWLLVNGRDKPQLIFYRPVDFWHKVADLPDAFWAEHVEIKLLTKADKVAELLPSDISQWAYIGEHLDVAEVLGFKTRNPDAVMSYLHYHRASKTQYELCCLRNANEIAVKGHLAAKNAFFNGGSEFEIQQEYLTATNQGENEVPYGNIVALNENAAILHYTKLESVRPESRHSFLIDAGANFFGYASDITRTYAFEKNIFSELIEAMDKMQQEIISMMRPGVKYVDLHIATHQKLAKILVDFDIASGEPQSLVDQGITNVFFPHGLGHMLGLQVHDMGGFLHDERGTHIAAPDAHPFLRCTRTLAANQVLTIEPGIYIIDSLLNELKQDSRKKQVNWQTVDLLRPFGGIRIEDNVIVHADQNENMTRDCGLN</sequence>
<organism>
    <name type="scientific">Shewanella woodyi (strain ATCC 51908 / MS32)</name>
    <dbReference type="NCBI Taxonomy" id="392500"/>
    <lineage>
        <taxon>Bacteria</taxon>
        <taxon>Pseudomonadati</taxon>
        <taxon>Pseudomonadota</taxon>
        <taxon>Gammaproteobacteria</taxon>
        <taxon>Alteromonadales</taxon>
        <taxon>Shewanellaceae</taxon>
        <taxon>Shewanella</taxon>
    </lineage>
</organism>
<gene>
    <name evidence="1" type="primary">pepQ</name>
    <name type="ordered locus">Swoo_0022</name>
</gene>
<protein>
    <recommendedName>
        <fullName evidence="1">Xaa-Pro dipeptidase</fullName>
        <shortName evidence="1">X-Pro dipeptidase</shortName>
        <ecNumber evidence="1">3.4.13.9</ecNumber>
    </recommendedName>
    <alternativeName>
        <fullName evidence="1">Imidodipeptidase</fullName>
    </alternativeName>
    <alternativeName>
        <fullName evidence="1">Proline dipeptidase</fullName>
        <shortName evidence="1">Prolidase</shortName>
    </alternativeName>
</protein>
<proteinExistence type="inferred from homology"/>
<dbReference type="EC" id="3.4.13.9" evidence="1"/>
<dbReference type="EMBL" id="CP000961">
    <property type="protein sequence ID" value="ACA84323.1"/>
    <property type="molecule type" value="Genomic_DNA"/>
</dbReference>
<dbReference type="RefSeq" id="WP_012322672.1">
    <property type="nucleotide sequence ID" value="NC_010506.1"/>
</dbReference>
<dbReference type="SMR" id="B1KCZ4"/>
<dbReference type="STRING" id="392500.Swoo_0022"/>
<dbReference type="MEROPS" id="M24.003"/>
<dbReference type="KEGG" id="swd:Swoo_0022"/>
<dbReference type="eggNOG" id="COG0006">
    <property type="taxonomic scope" value="Bacteria"/>
</dbReference>
<dbReference type="HOGENOM" id="CLU_050675_0_0_6"/>
<dbReference type="Proteomes" id="UP000002168">
    <property type="component" value="Chromosome"/>
</dbReference>
<dbReference type="GO" id="GO:0005829">
    <property type="term" value="C:cytosol"/>
    <property type="evidence" value="ECO:0007669"/>
    <property type="project" value="TreeGrafter"/>
</dbReference>
<dbReference type="GO" id="GO:0004177">
    <property type="term" value="F:aminopeptidase activity"/>
    <property type="evidence" value="ECO:0007669"/>
    <property type="project" value="TreeGrafter"/>
</dbReference>
<dbReference type="GO" id="GO:0046872">
    <property type="term" value="F:metal ion binding"/>
    <property type="evidence" value="ECO:0007669"/>
    <property type="project" value="UniProtKB-KW"/>
</dbReference>
<dbReference type="GO" id="GO:0008235">
    <property type="term" value="F:metalloexopeptidase activity"/>
    <property type="evidence" value="ECO:0007669"/>
    <property type="project" value="UniProtKB-UniRule"/>
</dbReference>
<dbReference type="GO" id="GO:0016795">
    <property type="term" value="F:phosphoric triester hydrolase activity"/>
    <property type="evidence" value="ECO:0007669"/>
    <property type="project" value="InterPro"/>
</dbReference>
<dbReference type="GO" id="GO:0102009">
    <property type="term" value="F:proline dipeptidase activity"/>
    <property type="evidence" value="ECO:0007669"/>
    <property type="project" value="UniProtKB-EC"/>
</dbReference>
<dbReference type="GO" id="GO:0006508">
    <property type="term" value="P:proteolysis"/>
    <property type="evidence" value="ECO:0007669"/>
    <property type="project" value="UniProtKB-KW"/>
</dbReference>
<dbReference type="CDD" id="cd01087">
    <property type="entry name" value="Prolidase"/>
    <property type="match status" value="1"/>
</dbReference>
<dbReference type="Gene3D" id="3.90.230.10">
    <property type="entry name" value="Creatinase/methionine aminopeptidase superfamily"/>
    <property type="match status" value="1"/>
</dbReference>
<dbReference type="Gene3D" id="3.40.350.10">
    <property type="entry name" value="Creatinase/prolidase N-terminal domain"/>
    <property type="match status" value="1"/>
</dbReference>
<dbReference type="HAMAP" id="MF_01279">
    <property type="entry name" value="X_Pro_dipeptid"/>
    <property type="match status" value="1"/>
</dbReference>
<dbReference type="InterPro" id="IPR029149">
    <property type="entry name" value="Creatin/AminoP/Spt16_N"/>
</dbReference>
<dbReference type="InterPro" id="IPR036005">
    <property type="entry name" value="Creatinase/aminopeptidase-like"/>
</dbReference>
<dbReference type="InterPro" id="IPR048819">
    <property type="entry name" value="PepQ_N"/>
</dbReference>
<dbReference type="InterPro" id="IPR000994">
    <property type="entry name" value="Pept_M24"/>
</dbReference>
<dbReference type="InterPro" id="IPR001131">
    <property type="entry name" value="Peptidase_M24B_aminopep-P_CS"/>
</dbReference>
<dbReference type="InterPro" id="IPR052433">
    <property type="entry name" value="X-Pro_dipept-like"/>
</dbReference>
<dbReference type="InterPro" id="IPR022846">
    <property type="entry name" value="X_Pro_dipept"/>
</dbReference>
<dbReference type="NCBIfam" id="NF010133">
    <property type="entry name" value="PRK13607.1"/>
    <property type="match status" value="1"/>
</dbReference>
<dbReference type="PANTHER" id="PTHR43226">
    <property type="entry name" value="XAA-PRO AMINOPEPTIDASE 3"/>
    <property type="match status" value="1"/>
</dbReference>
<dbReference type="PANTHER" id="PTHR43226:SF8">
    <property type="entry name" value="XAA-PRO DIPEPTIDASE"/>
    <property type="match status" value="1"/>
</dbReference>
<dbReference type="Pfam" id="PF21216">
    <property type="entry name" value="PepQ_N"/>
    <property type="match status" value="1"/>
</dbReference>
<dbReference type="Pfam" id="PF00557">
    <property type="entry name" value="Peptidase_M24"/>
    <property type="match status" value="1"/>
</dbReference>
<dbReference type="SUPFAM" id="SSF55920">
    <property type="entry name" value="Creatinase/aminopeptidase"/>
    <property type="match status" value="1"/>
</dbReference>
<dbReference type="PROSITE" id="PS00491">
    <property type="entry name" value="PROLINE_PEPTIDASE"/>
    <property type="match status" value="1"/>
</dbReference>
<reference key="1">
    <citation type="submission" date="2008-02" db="EMBL/GenBank/DDBJ databases">
        <title>Complete sequence of Shewanella woodyi ATCC 51908.</title>
        <authorList>
            <consortium name="US DOE Joint Genome Institute"/>
            <person name="Copeland A."/>
            <person name="Lucas S."/>
            <person name="Lapidus A."/>
            <person name="Glavina del Rio T."/>
            <person name="Dalin E."/>
            <person name="Tice H."/>
            <person name="Bruce D."/>
            <person name="Goodwin L."/>
            <person name="Pitluck S."/>
            <person name="Sims D."/>
            <person name="Brettin T."/>
            <person name="Detter J.C."/>
            <person name="Han C."/>
            <person name="Kuske C.R."/>
            <person name="Schmutz J."/>
            <person name="Larimer F."/>
            <person name="Land M."/>
            <person name="Hauser L."/>
            <person name="Kyrpides N."/>
            <person name="Lykidis A."/>
            <person name="Zhao J.-S."/>
            <person name="Richardson P."/>
        </authorList>
    </citation>
    <scope>NUCLEOTIDE SEQUENCE [LARGE SCALE GENOMIC DNA]</scope>
    <source>
        <strain>ATCC 51908 / MS32</strain>
    </source>
</reference>
<evidence type="ECO:0000255" key="1">
    <source>
        <dbReference type="HAMAP-Rule" id="MF_01279"/>
    </source>
</evidence>
<feature type="chain" id="PRO_1000140332" description="Xaa-Pro dipeptidase">
    <location>
        <begin position="1"/>
        <end position="439"/>
    </location>
</feature>
<feature type="binding site" evidence="1">
    <location>
        <position position="244"/>
    </location>
    <ligand>
        <name>Mn(2+)</name>
        <dbReference type="ChEBI" id="CHEBI:29035"/>
        <label>2</label>
    </ligand>
</feature>
<feature type="binding site" evidence="1">
    <location>
        <position position="255"/>
    </location>
    <ligand>
        <name>Mn(2+)</name>
        <dbReference type="ChEBI" id="CHEBI:29035"/>
        <label>1</label>
    </ligand>
</feature>
<feature type="binding site" evidence="1">
    <location>
        <position position="255"/>
    </location>
    <ligand>
        <name>Mn(2+)</name>
        <dbReference type="ChEBI" id="CHEBI:29035"/>
        <label>2</label>
    </ligand>
</feature>
<feature type="binding site" evidence="1">
    <location>
        <position position="335"/>
    </location>
    <ligand>
        <name>Mn(2+)</name>
        <dbReference type="ChEBI" id="CHEBI:29035"/>
        <label>1</label>
    </ligand>
</feature>
<feature type="binding site" evidence="1">
    <location>
        <position position="380"/>
    </location>
    <ligand>
        <name>Mn(2+)</name>
        <dbReference type="ChEBI" id="CHEBI:29035"/>
        <label>1</label>
    </ligand>
</feature>
<feature type="binding site" evidence="1">
    <location>
        <position position="419"/>
    </location>
    <ligand>
        <name>Mn(2+)</name>
        <dbReference type="ChEBI" id="CHEBI:29035"/>
        <label>1</label>
    </ligand>
</feature>
<feature type="binding site" evidence="1">
    <location>
        <position position="419"/>
    </location>
    <ligand>
        <name>Mn(2+)</name>
        <dbReference type="ChEBI" id="CHEBI:29035"/>
        <label>2</label>
    </ligand>
</feature>
<name>PEPQ_SHEWM</name>